<gene>
    <name evidence="6" type="primary">Zbp1</name>
    <name evidence="4" type="synonym">Dlm1</name>
</gene>
<name>ZBP1_RAT</name>
<protein>
    <recommendedName>
        <fullName evidence="5">Z-DNA-binding protein 1</fullName>
    </recommendedName>
    <alternativeName>
        <fullName evidence="4">Tumor stroma and activated macrophage protein DLM-1</fullName>
    </alternativeName>
</protein>
<accession>Q8VDA5</accession>
<evidence type="ECO:0000250" key="1">
    <source>
        <dbReference type="UniProtKB" id="Q9QY24"/>
    </source>
</evidence>
<evidence type="ECO:0000255" key="2">
    <source>
        <dbReference type="PROSITE-ProRule" id="PRU00073"/>
    </source>
</evidence>
<evidence type="ECO:0000256" key="3">
    <source>
        <dbReference type="SAM" id="MobiDB-lite"/>
    </source>
</evidence>
<evidence type="ECO:0000303" key="4">
    <source>
    </source>
</evidence>
<evidence type="ECO:0000305" key="5"/>
<evidence type="ECO:0000312" key="6">
    <source>
        <dbReference type="RGD" id="619956"/>
    </source>
</evidence>
<feature type="chain" id="PRO_0000066566" description="Z-DNA-binding protein 1">
    <location>
        <begin position="1"/>
        <end position="409"/>
    </location>
</feature>
<feature type="domain" description="Z-binding 1" evidence="2">
    <location>
        <begin position="8"/>
        <end position="70"/>
    </location>
</feature>
<feature type="domain" description="Z-binding 2" evidence="2">
    <location>
        <begin position="85"/>
        <end position="147"/>
    </location>
</feature>
<feature type="region of interest" description="Disordered" evidence="3">
    <location>
        <begin position="59"/>
        <end position="87"/>
    </location>
</feature>
<feature type="region of interest" description="Disordered" evidence="3">
    <location>
        <begin position="269"/>
        <end position="307"/>
    </location>
</feature>
<feature type="region of interest" description="Disordered" evidence="3">
    <location>
        <begin position="323"/>
        <end position="369"/>
    </location>
</feature>
<feature type="short sequence motif" description="RIP homotypic interaction motif (RHIM) 1" evidence="1">
    <location>
        <begin position="183"/>
        <end position="207"/>
    </location>
</feature>
<feature type="short sequence motif" description="RIP homotypic interaction motif (RHIM) 2" evidence="1">
    <location>
        <begin position="241"/>
        <end position="265"/>
    </location>
</feature>
<feature type="compositionally biased region" description="Low complexity" evidence="3">
    <location>
        <begin position="270"/>
        <end position="290"/>
    </location>
</feature>
<feature type="compositionally biased region" description="Basic and acidic residues" evidence="3">
    <location>
        <begin position="337"/>
        <end position="351"/>
    </location>
</feature>
<feature type="cross-link" description="Glycyl lysine isopeptide (Lys-Gly) (interchain with G-Cter in ubiquitin)" evidence="1">
    <location>
        <position position="17"/>
    </location>
</feature>
<feature type="cross-link" description="Glycyl lysine isopeptide (Lys-Gly) (interchain with G-Cter in ubiquitin)" evidence="1">
    <location>
        <position position="43"/>
    </location>
</feature>
<dbReference type="EMBL" id="AJ302054">
    <property type="protein sequence ID" value="CAC83103.1"/>
    <property type="molecule type" value="mRNA"/>
</dbReference>
<dbReference type="SMR" id="Q8VDA5"/>
<dbReference type="FunCoup" id="Q8VDA5">
    <property type="interactions" value="109"/>
</dbReference>
<dbReference type="STRING" id="10116.ENSRNOP00000071089"/>
<dbReference type="GlyGen" id="Q8VDA5">
    <property type="glycosylation" value="1 site"/>
</dbReference>
<dbReference type="iPTMnet" id="Q8VDA5"/>
<dbReference type="PhosphoSitePlus" id="Q8VDA5"/>
<dbReference type="PaxDb" id="10116-ENSRNOP00000008365"/>
<dbReference type="UCSC" id="RGD:619956">
    <property type="organism name" value="rat"/>
</dbReference>
<dbReference type="AGR" id="RGD:619956"/>
<dbReference type="RGD" id="619956">
    <property type="gene designation" value="Zbp1"/>
</dbReference>
<dbReference type="eggNOG" id="ENOG502SRWE">
    <property type="taxonomic scope" value="Eukaryota"/>
</dbReference>
<dbReference type="InParanoid" id="Q8VDA5"/>
<dbReference type="PhylomeDB" id="Q8VDA5"/>
<dbReference type="PRO" id="PR:Q8VDA5"/>
<dbReference type="Proteomes" id="UP000002494">
    <property type="component" value="Unplaced"/>
</dbReference>
<dbReference type="GO" id="GO:0005737">
    <property type="term" value="C:cytoplasm"/>
    <property type="evidence" value="ECO:0000266"/>
    <property type="project" value="RGD"/>
</dbReference>
<dbReference type="GO" id="GO:0005829">
    <property type="term" value="C:cytosol"/>
    <property type="evidence" value="ECO:0000266"/>
    <property type="project" value="RGD"/>
</dbReference>
<dbReference type="GO" id="GO:0005634">
    <property type="term" value="C:nucleus"/>
    <property type="evidence" value="ECO:0000250"/>
    <property type="project" value="UniProtKB"/>
</dbReference>
<dbReference type="GO" id="GO:0003677">
    <property type="term" value="F:DNA binding"/>
    <property type="evidence" value="ECO:0000266"/>
    <property type="project" value="RGD"/>
</dbReference>
<dbReference type="GO" id="GO:0003726">
    <property type="term" value="F:double-stranded RNA adenosine deaminase activity"/>
    <property type="evidence" value="ECO:0007669"/>
    <property type="project" value="InterPro"/>
</dbReference>
<dbReference type="GO" id="GO:0003725">
    <property type="term" value="F:double-stranded RNA binding"/>
    <property type="evidence" value="ECO:0000250"/>
    <property type="project" value="UniProtKB"/>
</dbReference>
<dbReference type="GO" id="GO:0003692">
    <property type="term" value="F:left-handed Z-DNA binding"/>
    <property type="evidence" value="ECO:0000266"/>
    <property type="project" value="RGD"/>
</dbReference>
<dbReference type="GO" id="GO:0003723">
    <property type="term" value="F:RNA binding"/>
    <property type="evidence" value="ECO:0000266"/>
    <property type="project" value="RGD"/>
</dbReference>
<dbReference type="GO" id="GO:0002218">
    <property type="term" value="P:activation of innate immune response"/>
    <property type="evidence" value="ECO:0000250"/>
    <property type="project" value="UniProtKB"/>
</dbReference>
<dbReference type="GO" id="GO:0140374">
    <property type="term" value="P:antiviral innate immune response"/>
    <property type="evidence" value="ECO:0000266"/>
    <property type="project" value="RGD"/>
</dbReference>
<dbReference type="GO" id="GO:0006915">
    <property type="term" value="P:apoptotic process"/>
    <property type="evidence" value="ECO:0007669"/>
    <property type="project" value="UniProtKB-KW"/>
</dbReference>
<dbReference type="GO" id="GO:0050832">
    <property type="term" value="P:defense response to fungus"/>
    <property type="evidence" value="ECO:0000250"/>
    <property type="project" value="UniProtKB"/>
</dbReference>
<dbReference type="GO" id="GO:0051607">
    <property type="term" value="P:defense response to virus"/>
    <property type="evidence" value="ECO:0000250"/>
    <property type="project" value="UniProtKB"/>
</dbReference>
<dbReference type="GO" id="GO:0043065">
    <property type="term" value="P:positive regulation of apoptotic process"/>
    <property type="evidence" value="ECO:0000250"/>
    <property type="project" value="UniProtKB"/>
</dbReference>
<dbReference type="GO" id="GO:0050729">
    <property type="term" value="P:positive regulation of inflammatory response"/>
    <property type="evidence" value="ECO:0000250"/>
    <property type="project" value="UniProtKB"/>
</dbReference>
<dbReference type="GO" id="GO:0060545">
    <property type="term" value="P:positive regulation of necroptotic process"/>
    <property type="evidence" value="ECO:0000250"/>
    <property type="project" value="UniProtKB"/>
</dbReference>
<dbReference type="GO" id="GO:0060340">
    <property type="term" value="P:positive regulation of type I interferon-mediated signaling pathway"/>
    <property type="evidence" value="ECO:0000266"/>
    <property type="project" value="RGD"/>
</dbReference>
<dbReference type="GO" id="GO:0070269">
    <property type="term" value="P:pyroptotic inflammatory response"/>
    <property type="evidence" value="ECO:0000250"/>
    <property type="project" value="UniProtKB"/>
</dbReference>
<dbReference type="GO" id="GO:0050727">
    <property type="term" value="P:regulation of inflammatory response"/>
    <property type="evidence" value="ECO:0000250"/>
    <property type="project" value="UniProtKB"/>
</dbReference>
<dbReference type="GO" id="GO:2000659">
    <property type="term" value="P:regulation of interleukin-1-mediated signaling pathway"/>
    <property type="evidence" value="ECO:0000250"/>
    <property type="project" value="UniProtKB"/>
</dbReference>
<dbReference type="FunFam" id="1.10.10.10:FF:000525">
    <property type="entry name" value="Z-DNA binding protein 1"/>
    <property type="match status" value="1"/>
</dbReference>
<dbReference type="Gene3D" id="1.10.10.10">
    <property type="entry name" value="Winged helix-like DNA-binding domain superfamily/Winged helix DNA-binding domain"/>
    <property type="match status" value="2"/>
</dbReference>
<dbReference type="InterPro" id="IPR025735">
    <property type="entry name" value="RHIM"/>
</dbReference>
<dbReference type="InterPro" id="IPR036388">
    <property type="entry name" value="WH-like_DNA-bd_sf"/>
</dbReference>
<dbReference type="InterPro" id="IPR036390">
    <property type="entry name" value="WH_DNA-bd_sf"/>
</dbReference>
<dbReference type="InterPro" id="IPR042371">
    <property type="entry name" value="Z_dom"/>
</dbReference>
<dbReference type="InterPro" id="IPR042361">
    <property type="entry name" value="ZBP1"/>
</dbReference>
<dbReference type="PANTHER" id="PTHR14966">
    <property type="entry name" value="Z-DNA-BINDING PROTEIN 1"/>
    <property type="match status" value="1"/>
</dbReference>
<dbReference type="PANTHER" id="PTHR14966:SF0">
    <property type="entry name" value="Z-DNA-BINDING PROTEIN 1"/>
    <property type="match status" value="1"/>
</dbReference>
<dbReference type="Pfam" id="PF12721">
    <property type="entry name" value="RHIM"/>
    <property type="match status" value="3"/>
</dbReference>
<dbReference type="Pfam" id="PF02295">
    <property type="entry name" value="z-alpha"/>
    <property type="match status" value="2"/>
</dbReference>
<dbReference type="SMART" id="SM00550">
    <property type="entry name" value="Zalpha"/>
    <property type="match status" value="2"/>
</dbReference>
<dbReference type="SUPFAM" id="SSF46785">
    <property type="entry name" value="Winged helix' DNA-binding domain"/>
    <property type="match status" value="2"/>
</dbReference>
<dbReference type="PROSITE" id="PS50139">
    <property type="entry name" value="Z_BINDING"/>
    <property type="match status" value="2"/>
</dbReference>
<reference key="1">
    <citation type="journal article" date="2002" name="Nucleic Acids Res.">
        <title>Complex regulation of the human gene for the Z-DNA binding protein DLM-1.</title>
        <authorList>
            <person name="Rothenburg S."/>
            <person name="Schwartz T."/>
            <person name="Koch-Nolte F."/>
            <person name="Haag F."/>
        </authorList>
    </citation>
    <scope>NUCLEOTIDE SEQUENCE [MRNA]</scope>
    <source>
        <strain>Lewis</strain>
        <tissue>Spleen</tissue>
    </source>
</reference>
<sequence>MAEASVDLGTGDNLEQKILQVLSDAGSPVQIDQLLKKLQVPKKILNQVLYRLKKEGRVSSPAPATWSLGGDGASGDGAPEIPEDSAAQPSLEERILRFLETKGPQRALHIAKALGMTTAKEVNPILYSMRNKHLLTVSDTQMWTIYRSSQEGQERACSGVGQESPAVIYQQNPINMICQQGPNSLISISNSKAIQIGHGNVMSRQTICGDPGPGTPHHAPLPVLEDAAAQDTPPGTHGAQLIHLNKSMLRRVQLGHGNEMNLERDPVEHPIFSFSSSPPESTTTADPETAFNMQTPEPGPHPEGGTTQIVHIKSCLLEDTTVGNNNKMTIHRRSKGGTKESADSQELKEDTGASSEATPPRSCLHTPSDSTLLTSELTAMALGDGSPQITESMLREDEVQAAETCQTQD</sequence>
<proteinExistence type="evidence at transcript level"/>
<comment type="function">
    <text evidence="1">Key innate sensor that recognizes and binds Z-RNA structures, which are produced by a number of viruses, such as herpesvirus, orthomyxovirus or flavivirus, and triggers different forms of cell death. ZBP1 acts as an essential mediator of pyroptosis, necroptosis and apoptosis (PANoptosis), an integral part of host defense against pathogens, by activating RIPK3, caspase-8 (CASP8), and the NLRP3 inflammasome. Key activator of necroptosis, a programmed cell death process in response to death-inducing TNF-alpha family members, via its ability to bind Z-RNA: once activated upon Z-RNA-binding, ZBP1 interacts and stimulates RIPK3 kinase, which phosphorylates and activates MLKL, triggering execution of programmed necrosis. In addition to TNF-induced necroptosis, necroptosis can also take place in the nucleus in response to orthomyxoviruses infection: ZBP1 recognizes and binds Z-RNA structures that are produced in infected nuclei by orthomyxoviruses, such as the influenza A virus (IAV), leading to ZBP1 activation, RIPK3 stimulation and subsequent MLKL phosphorylation, triggering disruption of the nuclear envelope and leakage of cellular DNA into the cytosol. ZBP1-dependent cell death in response to IAV infection promotes interleukin-1 alpha (IL1A) induction in an NLRP3-inflammasome-independent manner: IL1A expression is required for the optimal interleukin-1 beta (IL1B) production, and together, these cytokines promote infiltration of inflammatory neutrophils to the lung, leading to the formation of neutrophil extracellular traps. In addition to its direct role in driving necroptosis via its ability to sense Z-RNAs, also involved in PANoptosis triggered in response to bacterial infection: component of the AIM2 PANoptosome complex, a multiprotein complex that triggers PANoptosis. Also acts as the apical sensor of fungal infection responsible for activating PANoptosis. Involved in CASP8-mediated cell death via its interaction with RIPK1 but independently of its ability to sense Z-RNAs. In some cell types, also able to restrict viral replication by promoting cell death-independent responses. In response to flavivirus infection in neurons, promotes a cell death-independent pathway that restricts viral replication: together with RIPK3, promotes a death-independent transcriptional program that modifies the cellular metabolism via up-regulation expression of the enzyme ACOD1/IRG1 and production of the metabolite itaconate. Itaconate inhibits the activity of succinate dehydrogenase, generating a metabolic state in neurons that suppresses replication of viral genomes.</text>
</comment>
<comment type="activity regulation">
    <text evidence="1">ZBP1-dependent necroptosis is normally inhibited by RIPK1: RIPK1 inhibits the ZBP1-induced activation of RIPK3 via FADD-mediated recruitment of CASP8, which cleaves RIPK1 and limits TNF-induced necroptosis.</text>
</comment>
<comment type="subunit">
    <text evidence="1">Homodimer. Interacts (via RIP homotypic interaction motif) with RIPK3; leading to RIPK3 activation and necroptosis; interaction is enhanced by CASP6. Interacts (via RIP homotypic interaction motif) with RIPK1. Component of the AIM2 PANoptosome complex, a multiprotein complex that drives inflammatory cell death (PANoptosis).</text>
</comment>
<comment type="subcellular location">
    <subcellularLocation>
        <location evidence="1">Cytoplasm</location>
    </subcellularLocation>
    <subcellularLocation>
        <location evidence="1">Nucleus</location>
    </subcellularLocation>
    <text evidence="1">Mainly cytoplasmic. Accumulates in the nucleus in response to influenza A virus (IAV) infection: senses IAV defective viral genomes RNA in the nucleus.</text>
</comment>
<comment type="domain">
    <text evidence="1">The Z-binding domains recognize and bind left-handed double-stranded Z-RNA structures, but not A-RNA, the right-handed double-stranded RNAs that are structurally very different from Z-RNAs. The second Z-binding domain (also named Zalpha2) acts as a molecular switch regulating pyroptosis, necroptosis and apoptosis (PANoptosis). The second Z-binding domain is essential for sensing influenza A virus (IAV) Z-RNAs.</text>
</comment>
<comment type="PTM">
    <text evidence="1">Ubiquitinated; polyubiquitinated following influenza A virus (IAV) infection.</text>
</comment>
<comment type="PTM">
    <text evidence="1">Phosphorylated.</text>
</comment>
<organism>
    <name type="scientific">Rattus norvegicus</name>
    <name type="common">Rat</name>
    <dbReference type="NCBI Taxonomy" id="10116"/>
    <lineage>
        <taxon>Eukaryota</taxon>
        <taxon>Metazoa</taxon>
        <taxon>Chordata</taxon>
        <taxon>Craniata</taxon>
        <taxon>Vertebrata</taxon>
        <taxon>Euteleostomi</taxon>
        <taxon>Mammalia</taxon>
        <taxon>Eutheria</taxon>
        <taxon>Euarchontoglires</taxon>
        <taxon>Glires</taxon>
        <taxon>Rodentia</taxon>
        <taxon>Myomorpha</taxon>
        <taxon>Muroidea</taxon>
        <taxon>Muridae</taxon>
        <taxon>Murinae</taxon>
        <taxon>Rattus</taxon>
    </lineage>
</organism>
<keyword id="KW-0051">Antiviral defense</keyword>
<keyword id="KW-0053">Apoptosis</keyword>
<keyword id="KW-0963">Cytoplasm</keyword>
<keyword id="KW-0238">DNA-binding</keyword>
<keyword id="KW-0945">Host-virus interaction</keyword>
<keyword id="KW-0391">Immunity</keyword>
<keyword id="KW-0399">Innate immunity</keyword>
<keyword id="KW-1017">Isopeptide bond</keyword>
<keyword id="KW-1210">Necrosis</keyword>
<keyword id="KW-0539">Nucleus</keyword>
<keyword id="KW-1185">Reference proteome</keyword>
<keyword id="KW-0677">Repeat</keyword>
<keyword id="KW-0694">RNA-binding</keyword>
<keyword id="KW-0832">Ubl conjugation</keyword>